<reference key="1">
    <citation type="submission" date="2009-06" db="EMBL/GenBank/DDBJ databases">
        <title>Complete sequence of chromosome of Geopacillus sp. WCH70.</title>
        <authorList>
            <consortium name="US DOE Joint Genome Institute"/>
            <person name="Lucas S."/>
            <person name="Copeland A."/>
            <person name="Lapidus A."/>
            <person name="Glavina del Rio T."/>
            <person name="Dalin E."/>
            <person name="Tice H."/>
            <person name="Bruce D."/>
            <person name="Goodwin L."/>
            <person name="Pitluck S."/>
            <person name="Chertkov O."/>
            <person name="Brettin T."/>
            <person name="Detter J.C."/>
            <person name="Han C."/>
            <person name="Larimer F."/>
            <person name="Land M."/>
            <person name="Hauser L."/>
            <person name="Kyrpides N."/>
            <person name="Mikhailova N."/>
            <person name="Brumm P."/>
            <person name="Mead D.A."/>
            <person name="Richardson P."/>
        </authorList>
    </citation>
    <scope>NUCLEOTIDE SEQUENCE [LARGE SCALE GENOMIC DNA]</scope>
    <source>
        <strain>WCH70</strain>
    </source>
</reference>
<name>Y2696_GEOSW</name>
<keyword id="KW-0378">Hydrolase</keyword>
<dbReference type="EMBL" id="CP001638">
    <property type="protein sequence ID" value="ACS25388.1"/>
    <property type="molecule type" value="Genomic_DNA"/>
</dbReference>
<dbReference type="SMR" id="C5D672"/>
<dbReference type="STRING" id="471223.GWCH70_2696"/>
<dbReference type="KEGG" id="gwc:GWCH70_2696"/>
<dbReference type="eggNOG" id="COG2220">
    <property type="taxonomic scope" value="Bacteria"/>
</dbReference>
<dbReference type="HOGENOM" id="CLU_070010_4_1_9"/>
<dbReference type="OrthoDB" id="9789133at2"/>
<dbReference type="GO" id="GO:0016787">
    <property type="term" value="F:hydrolase activity"/>
    <property type="evidence" value="ECO:0007669"/>
    <property type="project" value="UniProtKB-UniRule"/>
</dbReference>
<dbReference type="Gene3D" id="3.60.15.10">
    <property type="entry name" value="Ribonuclease Z/Hydroxyacylglutathione hydrolase-like"/>
    <property type="match status" value="1"/>
</dbReference>
<dbReference type="HAMAP" id="MF_00457">
    <property type="entry name" value="UPF0173"/>
    <property type="match status" value="1"/>
</dbReference>
<dbReference type="InterPro" id="IPR001279">
    <property type="entry name" value="Metallo-B-lactamas"/>
</dbReference>
<dbReference type="InterPro" id="IPR036866">
    <property type="entry name" value="RibonucZ/Hydroxyglut_hydro"/>
</dbReference>
<dbReference type="InterPro" id="IPR022877">
    <property type="entry name" value="UPF0173"/>
</dbReference>
<dbReference type="InterPro" id="IPR050114">
    <property type="entry name" value="UPF0173_UPF0282_UlaG_hydrolase"/>
</dbReference>
<dbReference type="NCBIfam" id="NF001911">
    <property type="entry name" value="PRK00685.1"/>
    <property type="match status" value="1"/>
</dbReference>
<dbReference type="PANTHER" id="PTHR43546:SF3">
    <property type="entry name" value="UPF0173 METAL-DEPENDENT HYDROLASE MJ1163"/>
    <property type="match status" value="1"/>
</dbReference>
<dbReference type="PANTHER" id="PTHR43546">
    <property type="entry name" value="UPF0173 METAL-DEPENDENT HYDROLASE MJ1163-RELATED"/>
    <property type="match status" value="1"/>
</dbReference>
<dbReference type="Pfam" id="PF13483">
    <property type="entry name" value="Lactamase_B_3"/>
    <property type="match status" value="1"/>
</dbReference>
<dbReference type="SMART" id="SM00849">
    <property type="entry name" value="Lactamase_B"/>
    <property type="match status" value="1"/>
</dbReference>
<dbReference type="SUPFAM" id="SSF56281">
    <property type="entry name" value="Metallo-hydrolase/oxidoreductase"/>
    <property type="match status" value="1"/>
</dbReference>
<evidence type="ECO:0000255" key="1">
    <source>
        <dbReference type="HAMAP-Rule" id="MF_00457"/>
    </source>
</evidence>
<accession>C5D672</accession>
<proteinExistence type="inferred from homology"/>
<gene>
    <name type="ordered locus">GWCH70_2696</name>
</gene>
<protein>
    <recommendedName>
        <fullName evidence="1">UPF0173 metal-dependent hydrolase GWCH70_2696</fullName>
    </recommendedName>
</protein>
<organism>
    <name type="scientific">Geobacillus sp. (strain WCH70)</name>
    <dbReference type="NCBI Taxonomy" id="471223"/>
    <lineage>
        <taxon>Bacteria</taxon>
        <taxon>Bacillati</taxon>
        <taxon>Bacillota</taxon>
        <taxon>Bacilli</taxon>
        <taxon>Bacillales</taxon>
        <taxon>Anoxybacillaceae</taxon>
        <taxon>Geobacillus</taxon>
    </lineage>
</organism>
<feature type="chain" id="PRO_1000206281" description="UPF0173 metal-dependent hydrolase GWCH70_2696">
    <location>
        <begin position="1"/>
        <end position="226"/>
    </location>
</feature>
<comment type="similarity">
    <text evidence="1">Belongs to the UPF0173 family.</text>
</comment>
<sequence length="226" mass="24466">MKVTYHGHSVVKIETNGKTIFIDPFITGNGATDLKLEDVKADVILLTHGHGDHVGDTVQLAKKNNALVIAPFELATYLGWQGVNTHPMHIGGAHQFDFGKVKLTQAFHGSGYVTEDKQIIYLGMPAGILFTAEGKTIYHAGDTGLFSDMKLIGERNSIDVAFLPIGDNFTMGPEDAAVAAEWLRAKIVVPIHYNTFPVIAQDPHQFVALLPDGVGRVLKPGEGIEL</sequence>